<name>FPG_SALDC</name>
<reference key="1">
    <citation type="journal article" date="2011" name="J. Bacteriol.">
        <title>Comparative genomics of 28 Salmonella enterica isolates: evidence for CRISPR-mediated adaptive sublineage evolution.</title>
        <authorList>
            <person name="Fricke W.F."/>
            <person name="Mammel M.K."/>
            <person name="McDermott P.F."/>
            <person name="Tartera C."/>
            <person name="White D.G."/>
            <person name="Leclerc J.E."/>
            <person name="Ravel J."/>
            <person name="Cebula T.A."/>
        </authorList>
    </citation>
    <scope>NUCLEOTIDE SEQUENCE [LARGE SCALE GENOMIC DNA]</scope>
    <source>
        <strain>CT_02021853</strain>
    </source>
</reference>
<gene>
    <name evidence="2" type="primary">mutM</name>
    <name evidence="2" type="synonym">fpg</name>
    <name type="ordered locus">SeD_A4113</name>
</gene>
<proteinExistence type="inferred from homology"/>
<evidence type="ECO:0000250" key="1"/>
<evidence type="ECO:0000255" key="2">
    <source>
        <dbReference type="HAMAP-Rule" id="MF_00103"/>
    </source>
</evidence>
<sequence>MPELPEVETSRRGIEPHLVGATILHAHIRNGRLRWPVSDKIYRLSDTPVLSVQRRAKYLLLELPDGWIIIHLGMSGSLRILSEALPAEKHDHVDLVMSNGKILRYTDPRRFGAWLWTKELEGHNVLAHLGPEPLSDEFNGEYLQQKCAKKKTAIKPWLMDNKLVVGVGNIYASESLFAAGIHPDRLASSLSTEECDLLARVIKAVLLRSIEQGGTTLKDFLQSDGKPGYFAQELQVYGRKGEPCRVCGTPIVATKHAQRATFYCRHCQK</sequence>
<feature type="initiator methionine" description="Removed" evidence="1">
    <location>
        <position position="1"/>
    </location>
</feature>
<feature type="chain" id="PRO_1000094071" description="Formamidopyrimidine-DNA glycosylase">
    <location>
        <begin position="2"/>
        <end position="269"/>
    </location>
</feature>
<feature type="zinc finger region" description="FPG-type" evidence="2">
    <location>
        <begin position="235"/>
        <end position="269"/>
    </location>
</feature>
<feature type="active site" description="Schiff-base intermediate with DNA" evidence="2">
    <location>
        <position position="2"/>
    </location>
</feature>
<feature type="active site" description="Proton donor" evidence="2">
    <location>
        <position position="3"/>
    </location>
</feature>
<feature type="active site" description="Proton donor; for beta-elimination activity" evidence="2">
    <location>
        <position position="57"/>
    </location>
</feature>
<feature type="active site" description="Proton donor; for delta-elimination activity" evidence="2">
    <location>
        <position position="259"/>
    </location>
</feature>
<feature type="binding site" evidence="2">
    <location>
        <position position="90"/>
    </location>
    <ligand>
        <name>DNA</name>
        <dbReference type="ChEBI" id="CHEBI:16991"/>
    </ligand>
</feature>
<feature type="binding site" evidence="2">
    <location>
        <position position="109"/>
    </location>
    <ligand>
        <name>DNA</name>
        <dbReference type="ChEBI" id="CHEBI:16991"/>
    </ligand>
</feature>
<feature type="binding site" evidence="2">
    <location>
        <position position="150"/>
    </location>
    <ligand>
        <name>DNA</name>
        <dbReference type="ChEBI" id="CHEBI:16991"/>
    </ligand>
</feature>
<organism>
    <name type="scientific">Salmonella dublin (strain CT_02021853)</name>
    <dbReference type="NCBI Taxonomy" id="439851"/>
    <lineage>
        <taxon>Bacteria</taxon>
        <taxon>Pseudomonadati</taxon>
        <taxon>Pseudomonadota</taxon>
        <taxon>Gammaproteobacteria</taxon>
        <taxon>Enterobacterales</taxon>
        <taxon>Enterobacteriaceae</taxon>
        <taxon>Salmonella</taxon>
    </lineage>
</organism>
<keyword id="KW-0227">DNA damage</keyword>
<keyword id="KW-0234">DNA repair</keyword>
<keyword id="KW-0238">DNA-binding</keyword>
<keyword id="KW-0326">Glycosidase</keyword>
<keyword id="KW-0378">Hydrolase</keyword>
<keyword id="KW-0456">Lyase</keyword>
<keyword id="KW-0479">Metal-binding</keyword>
<keyword id="KW-0511">Multifunctional enzyme</keyword>
<keyword id="KW-0862">Zinc</keyword>
<keyword id="KW-0863">Zinc-finger</keyword>
<dbReference type="EC" id="3.2.2.23" evidence="2"/>
<dbReference type="EC" id="4.2.99.18" evidence="2"/>
<dbReference type="EMBL" id="CP001144">
    <property type="protein sequence ID" value="ACH73718.1"/>
    <property type="molecule type" value="Genomic_DNA"/>
</dbReference>
<dbReference type="RefSeq" id="WP_001114523.1">
    <property type="nucleotide sequence ID" value="NC_011205.1"/>
</dbReference>
<dbReference type="SMR" id="B5FM59"/>
<dbReference type="KEGG" id="sed:SeD_A4113"/>
<dbReference type="HOGENOM" id="CLU_038423_1_1_6"/>
<dbReference type="Proteomes" id="UP000008322">
    <property type="component" value="Chromosome"/>
</dbReference>
<dbReference type="GO" id="GO:0034039">
    <property type="term" value="F:8-oxo-7,8-dihydroguanine DNA N-glycosylase activity"/>
    <property type="evidence" value="ECO:0007669"/>
    <property type="project" value="TreeGrafter"/>
</dbReference>
<dbReference type="GO" id="GO:0140078">
    <property type="term" value="F:class I DNA-(apurinic or apyrimidinic site) endonuclease activity"/>
    <property type="evidence" value="ECO:0007669"/>
    <property type="project" value="UniProtKB-EC"/>
</dbReference>
<dbReference type="GO" id="GO:0003684">
    <property type="term" value="F:damaged DNA binding"/>
    <property type="evidence" value="ECO:0007669"/>
    <property type="project" value="InterPro"/>
</dbReference>
<dbReference type="GO" id="GO:0008270">
    <property type="term" value="F:zinc ion binding"/>
    <property type="evidence" value="ECO:0007669"/>
    <property type="project" value="UniProtKB-UniRule"/>
</dbReference>
<dbReference type="GO" id="GO:0006284">
    <property type="term" value="P:base-excision repair"/>
    <property type="evidence" value="ECO:0007669"/>
    <property type="project" value="InterPro"/>
</dbReference>
<dbReference type="CDD" id="cd08966">
    <property type="entry name" value="EcFpg-like_N"/>
    <property type="match status" value="1"/>
</dbReference>
<dbReference type="FunFam" id="1.10.8.50:FF:000003">
    <property type="entry name" value="Formamidopyrimidine-DNA glycosylase"/>
    <property type="match status" value="1"/>
</dbReference>
<dbReference type="FunFam" id="3.20.190.10:FF:000001">
    <property type="entry name" value="Formamidopyrimidine-DNA glycosylase"/>
    <property type="match status" value="1"/>
</dbReference>
<dbReference type="Gene3D" id="1.10.8.50">
    <property type="match status" value="1"/>
</dbReference>
<dbReference type="Gene3D" id="3.20.190.10">
    <property type="entry name" value="MutM-like, N-terminal"/>
    <property type="match status" value="1"/>
</dbReference>
<dbReference type="HAMAP" id="MF_00103">
    <property type="entry name" value="Fapy_DNA_glycosyl"/>
    <property type="match status" value="1"/>
</dbReference>
<dbReference type="InterPro" id="IPR015886">
    <property type="entry name" value="DNA_glyclase/AP_lyase_DNA-bd"/>
</dbReference>
<dbReference type="InterPro" id="IPR015887">
    <property type="entry name" value="DNA_glyclase_Znf_dom_DNA_BS"/>
</dbReference>
<dbReference type="InterPro" id="IPR020629">
    <property type="entry name" value="Formamido-pyr_DNA_Glyclase"/>
</dbReference>
<dbReference type="InterPro" id="IPR012319">
    <property type="entry name" value="FPG_cat"/>
</dbReference>
<dbReference type="InterPro" id="IPR035937">
    <property type="entry name" value="MutM-like_N-ter"/>
</dbReference>
<dbReference type="InterPro" id="IPR010979">
    <property type="entry name" value="Ribosomal_uS13-like_H2TH"/>
</dbReference>
<dbReference type="InterPro" id="IPR000214">
    <property type="entry name" value="Znf_DNA_glyclase/AP_lyase"/>
</dbReference>
<dbReference type="InterPro" id="IPR010663">
    <property type="entry name" value="Znf_FPG/IleRS"/>
</dbReference>
<dbReference type="NCBIfam" id="TIGR00577">
    <property type="entry name" value="fpg"/>
    <property type="match status" value="1"/>
</dbReference>
<dbReference type="NCBIfam" id="NF002211">
    <property type="entry name" value="PRK01103.1"/>
    <property type="match status" value="1"/>
</dbReference>
<dbReference type="PANTHER" id="PTHR22993">
    <property type="entry name" value="FORMAMIDOPYRIMIDINE-DNA GLYCOSYLASE"/>
    <property type="match status" value="1"/>
</dbReference>
<dbReference type="PANTHER" id="PTHR22993:SF9">
    <property type="entry name" value="FORMAMIDOPYRIMIDINE-DNA GLYCOSYLASE"/>
    <property type="match status" value="1"/>
</dbReference>
<dbReference type="Pfam" id="PF01149">
    <property type="entry name" value="Fapy_DNA_glyco"/>
    <property type="match status" value="1"/>
</dbReference>
<dbReference type="Pfam" id="PF06831">
    <property type="entry name" value="H2TH"/>
    <property type="match status" value="1"/>
</dbReference>
<dbReference type="Pfam" id="PF06827">
    <property type="entry name" value="zf-FPG_IleRS"/>
    <property type="match status" value="1"/>
</dbReference>
<dbReference type="SMART" id="SM00898">
    <property type="entry name" value="Fapy_DNA_glyco"/>
    <property type="match status" value="1"/>
</dbReference>
<dbReference type="SMART" id="SM01232">
    <property type="entry name" value="H2TH"/>
    <property type="match status" value="1"/>
</dbReference>
<dbReference type="SUPFAM" id="SSF57716">
    <property type="entry name" value="Glucocorticoid receptor-like (DNA-binding domain)"/>
    <property type="match status" value="1"/>
</dbReference>
<dbReference type="SUPFAM" id="SSF81624">
    <property type="entry name" value="N-terminal domain of MutM-like DNA repair proteins"/>
    <property type="match status" value="1"/>
</dbReference>
<dbReference type="SUPFAM" id="SSF46946">
    <property type="entry name" value="S13-like H2TH domain"/>
    <property type="match status" value="1"/>
</dbReference>
<dbReference type="PROSITE" id="PS51068">
    <property type="entry name" value="FPG_CAT"/>
    <property type="match status" value="1"/>
</dbReference>
<dbReference type="PROSITE" id="PS01242">
    <property type="entry name" value="ZF_FPG_1"/>
    <property type="match status" value="1"/>
</dbReference>
<dbReference type="PROSITE" id="PS51066">
    <property type="entry name" value="ZF_FPG_2"/>
    <property type="match status" value="1"/>
</dbReference>
<comment type="function">
    <text evidence="2">Involved in base excision repair of DNA damaged by oxidation or by mutagenic agents. Acts as a DNA glycosylase that recognizes and removes damaged bases. Has a preference for oxidized purines, such as 7,8-dihydro-8-oxoguanine (8-oxoG). Has AP (apurinic/apyrimidinic) lyase activity and introduces nicks in the DNA strand. Cleaves the DNA backbone by beta-delta elimination to generate a single-strand break at the site of the removed base with both 3'- and 5'-phosphates.</text>
</comment>
<comment type="catalytic activity">
    <reaction evidence="2">
        <text>Hydrolysis of DNA containing ring-opened 7-methylguanine residues, releasing 2,6-diamino-4-hydroxy-5-(N-methyl)formamidopyrimidine.</text>
        <dbReference type="EC" id="3.2.2.23"/>
    </reaction>
</comment>
<comment type="catalytic activity">
    <reaction evidence="2">
        <text>2'-deoxyribonucleotide-(2'-deoxyribose 5'-phosphate)-2'-deoxyribonucleotide-DNA = a 3'-end 2'-deoxyribonucleotide-(2,3-dehydro-2,3-deoxyribose 5'-phosphate)-DNA + a 5'-end 5'-phospho-2'-deoxyribonucleoside-DNA + H(+)</text>
        <dbReference type="Rhea" id="RHEA:66592"/>
        <dbReference type="Rhea" id="RHEA-COMP:13180"/>
        <dbReference type="Rhea" id="RHEA-COMP:16897"/>
        <dbReference type="Rhea" id="RHEA-COMP:17067"/>
        <dbReference type="ChEBI" id="CHEBI:15378"/>
        <dbReference type="ChEBI" id="CHEBI:136412"/>
        <dbReference type="ChEBI" id="CHEBI:157695"/>
        <dbReference type="ChEBI" id="CHEBI:167181"/>
        <dbReference type="EC" id="4.2.99.18"/>
    </reaction>
</comment>
<comment type="cofactor">
    <cofactor evidence="2">
        <name>Zn(2+)</name>
        <dbReference type="ChEBI" id="CHEBI:29105"/>
    </cofactor>
    <text evidence="2">Binds 1 zinc ion per subunit.</text>
</comment>
<comment type="subunit">
    <text evidence="2">Monomer.</text>
</comment>
<comment type="similarity">
    <text evidence="2">Belongs to the FPG family.</text>
</comment>
<protein>
    <recommendedName>
        <fullName evidence="2">Formamidopyrimidine-DNA glycosylase</fullName>
        <shortName evidence="2">Fapy-DNA glycosylase</shortName>
        <ecNumber evidence="2">3.2.2.23</ecNumber>
    </recommendedName>
    <alternativeName>
        <fullName evidence="2">DNA-(apurinic or apyrimidinic site) lyase MutM</fullName>
        <shortName evidence="2">AP lyase MutM</shortName>
        <ecNumber evidence="2">4.2.99.18</ecNumber>
    </alternativeName>
</protein>
<accession>B5FM59</accession>